<dbReference type="EC" id="2.7.7.6" evidence="1"/>
<dbReference type="EMBL" id="BA000034">
    <property type="protein sequence ID" value="BAC63171.1"/>
    <property type="molecule type" value="Genomic_DNA"/>
</dbReference>
<dbReference type="RefSeq" id="WP_002986567.1">
    <property type="nucleotide sequence ID" value="NC_004606.1"/>
</dbReference>
<dbReference type="SMR" id="P0DF31"/>
<dbReference type="KEGG" id="sps:SPs0076"/>
<dbReference type="HOGENOM" id="CLU_000524_4_1_9"/>
<dbReference type="GO" id="GO:0000428">
    <property type="term" value="C:DNA-directed RNA polymerase complex"/>
    <property type="evidence" value="ECO:0007669"/>
    <property type="project" value="UniProtKB-KW"/>
</dbReference>
<dbReference type="GO" id="GO:0003677">
    <property type="term" value="F:DNA binding"/>
    <property type="evidence" value="ECO:0007669"/>
    <property type="project" value="UniProtKB-UniRule"/>
</dbReference>
<dbReference type="GO" id="GO:0003899">
    <property type="term" value="F:DNA-directed RNA polymerase activity"/>
    <property type="evidence" value="ECO:0007669"/>
    <property type="project" value="UniProtKB-UniRule"/>
</dbReference>
<dbReference type="GO" id="GO:0032549">
    <property type="term" value="F:ribonucleoside binding"/>
    <property type="evidence" value="ECO:0007669"/>
    <property type="project" value="InterPro"/>
</dbReference>
<dbReference type="GO" id="GO:0006351">
    <property type="term" value="P:DNA-templated transcription"/>
    <property type="evidence" value="ECO:0007669"/>
    <property type="project" value="UniProtKB-UniRule"/>
</dbReference>
<dbReference type="CDD" id="cd00653">
    <property type="entry name" value="RNA_pol_B_RPB2"/>
    <property type="match status" value="1"/>
</dbReference>
<dbReference type="Gene3D" id="2.40.50.100">
    <property type="match status" value="1"/>
</dbReference>
<dbReference type="Gene3D" id="2.40.50.150">
    <property type="match status" value="1"/>
</dbReference>
<dbReference type="Gene3D" id="3.90.1100.10">
    <property type="match status" value="2"/>
</dbReference>
<dbReference type="Gene3D" id="2.30.150.10">
    <property type="entry name" value="DNA-directed RNA polymerase, beta subunit, external 1 domain"/>
    <property type="match status" value="1"/>
</dbReference>
<dbReference type="Gene3D" id="2.40.270.10">
    <property type="entry name" value="DNA-directed RNA polymerase, subunit 2, domain 6"/>
    <property type="match status" value="1"/>
</dbReference>
<dbReference type="Gene3D" id="3.90.1800.10">
    <property type="entry name" value="RNA polymerase alpha subunit dimerisation domain"/>
    <property type="match status" value="1"/>
</dbReference>
<dbReference type="Gene3D" id="3.90.1110.10">
    <property type="entry name" value="RNA polymerase Rpb2, domain 2"/>
    <property type="match status" value="1"/>
</dbReference>
<dbReference type="HAMAP" id="MF_01321">
    <property type="entry name" value="RNApol_bact_RpoB"/>
    <property type="match status" value="1"/>
</dbReference>
<dbReference type="InterPro" id="IPR042107">
    <property type="entry name" value="DNA-dir_RNA_pol_bsu_ext_1_sf"/>
</dbReference>
<dbReference type="InterPro" id="IPR019462">
    <property type="entry name" value="DNA-dir_RNA_pol_bsu_external_1"/>
</dbReference>
<dbReference type="InterPro" id="IPR015712">
    <property type="entry name" value="DNA-dir_RNA_pol_su2"/>
</dbReference>
<dbReference type="InterPro" id="IPR007120">
    <property type="entry name" value="DNA-dir_RNAP_su2_dom"/>
</dbReference>
<dbReference type="InterPro" id="IPR037033">
    <property type="entry name" value="DNA-dir_RNAP_su2_hyb_sf"/>
</dbReference>
<dbReference type="InterPro" id="IPR010243">
    <property type="entry name" value="RNA_pol_bsu_bac"/>
</dbReference>
<dbReference type="InterPro" id="IPR007121">
    <property type="entry name" value="RNA_pol_bsu_CS"/>
</dbReference>
<dbReference type="InterPro" id="IPR007644">
    <property type="entry name" value="RNA_pol_bsu_protrusion"/>
</dbReference>
<dbReference type="InterPro" id="IPR007642">
    <property type="entry name" value="RNA_pol_Rpb2_2"/>
</dbReference>
<dbReference type="InterPro" id="IPR037034">
    <property type="entry name" value="RNA_pol_Rpb2_2_sf"/>
</dbReference>
<dbReference type="InterPro" id="IPR007645">
    <property type="entry name" value="RNA_pol_Rpb2_3"/>
</dbReference>
<dbReference type="InterPro" id="IPR007641">
    <property type="entry name" value="RNA_pol_Rpb2_7"/>
</dbReference>
<dbReference type="InterPro" id="IPR014724">
    <property type="entry name" value="RNA_pol_RPB2_OB-fold"/>
</dbReference>
<dbReference type="NCBIfam" id="NF001616">
    <property type="entry name" value="PRK00405.1"/>
    <property type="match status" value="1"/>
</dbReference>
<dbReference type="NCBIfam" id="TIGR02013">
    <property type="entry name" value="rpoB"/>
    <property type="match status" value="1"/>
</dbReference>
<dbReference type="PANTHER" id="PTHR20856">
    <property type="entry name" value="DNA-DIRECTED RNA POLYMERASE I SUBUNIT 2"/>
    <property type="match status" value="1"/>
</dbReference>
<dbReference type="Pfam" id="PF04563">
    <property type="entry name" value="RNA_pol_Rpb2_1"/>
    <property type="match status" value="1"/>
</dbReference>
<dbReference type="Pfam" id="PF04561">
    <property type="entry name" value="RNA_pol_Rpb2_2"/>
    <property type="match status" value="2"/>
</dbReference>
<dbReference type="Pfam" id="PF04565">
    <property type="entry name" value="RNA_pol_Rpb2_3"/>
    <property type="match status" value="1"/>
</dbReference>
<dbReference type="Pfam" id="PF10385">
    <property type="entry name" value="RNA_pol_Rpb2_45"/>
    <property type="match status" value="1"/>
</dbReference>
<dbReference type="Pfam" id="PF00562">
    <property type="entry name" value="RNA_pol_Rpb2_6"/>
    <property type="match status" value="1"/>
</dbReference>
<dbReference type="Pfam" id="PF04560">
    <property type="entry name" value="RNA_pol_Rpb2_7"/>
    <property type="match status" value="1"/>
</dbReference>
<dbReference type="SUPFAM" id="SSF64484">
    <property type="entry name" value="beta and beta-prime subunits of DNA dependent RNA-polymerase"/>
    <property type="match status" value="1"/>
</dbReference>
<dbReference type="PROSITE" id="PS01166">
    <property type="entry name" value="RNA_POL_BETA"/>
    <property type="match status" value="1"/>
</dbReference>
<evidence type="ECO:0000255" key="1">
    <source>
        <dbReference type="HAMAP-Rule" id="MF_01321"/>
    </source>
</evidence>
<feature type="chain" id="PRO_0000411555" description="DNA-directed RNA polymerase subunit beta">
    <location>
        <begin position="1"/>
        <end position="1188"/>
    </location>
</feature>
<organism>
    <name type="scientific">Streptococcus pyogenes serotype M3 (strain SSI-1)</name>
    <dbReference type="NCBI Taxonomy" id="193567"/>
    <lineage>
        <taxon>Bacteria</taxon>
        <taxon>Bacillati</taxon>
        <taxon>Bacillota</taxon>
        <taxon>Bacilli</taxon>
        <taxon>Lactobacillales</taxon>
        <taxon>Streptococcaceae</taxon>
        <taxon>Streptococcus</taxon>
    </lineage>
</organism>
<keyword id="KW-0240">DNA-directed RNA polymerase</keyword>
<keyword id="KW-0548">Nucleotidyltransferase</keyword>
<keyword id="KW-0804">Transcription</keyword>
<keyword id="KW-0808">Transferase</keyword>
<comment type="function">
    <text evidence="1">DNA-dependent RNA polymerase catalyzes the transcription of DNA into RNA using the four ribonucleoside triphosphates as substrates.</text>
</comment>
<comment type="catalytic activity">
    <reaction evidence="1">
        <text>RNA(n) + a ribonucleoside 5'-triphosphate = RNA(n+1) + diphosphate</text>
        <dbReference type="Rhea" id="RHEA:21248"/>
        <dbReference type="Rhea" id="RHEA-COMP:14527"/>
        <dbReference type="Rhea" id="RHEA-COMP:17342"/>
        <dbReference type="ChEBI" id="CHEBI:33019"/>
        <dbReference type="ChEBI" id="CHEBI:61557"/>
        <dbReference type="ChEBI" id="CHEBI:140395"/>
        <dbReference type="EC" id="2.7.7.6"/>
    </reaction>
</comment>
<comment type="subunit">
    <text evidence="1">The RNAP catalytic core consists of 2 alpha, 1 beta, 1 beta' and 1 omega subunit. When a sigma factor is associated with the core the holoenzyme is formed, which can initiate transcription.</text>
</comment>
<comment type="similarity">
    <text evidence="1">Belongs to the RNA polymerase beta chain family.</text>
</comment>
<proteinExistence type="inferred from homology"/>
<sequence length="1188" mass="132855">MAGHEVRYGKHRTRRSFSRIKEVLDLPNLIEIQTDSFQDFLDSGLKEVFEDVLPISNFTDTMELEFVGYEFKEPKYTLEEARIHDASYSAPIFVTFRLVNKETGEIKTQEVFFGDFPIMTEMGTFIINGGERIIVSQLVRSPGVYFNDKVDKNGKVGYGSTVIPNRGAWLELETDSKDIAYTRIDRTRKIPFTTLVRALGFSGDDEIVDIFGESDLVRNTIEKDIHKNPSDSRTDEALKEIYERLRPGEPKTADSSRSLLIARFFDARRYDLAAVGRYKVNKKLNIKTRLLNQIIAENLVDAETGEILVEAGTEMTRSVIESIEEHLDGDLNKFVYTPNDYAVVTEPVVLQKFKVVSPIDPDRVVTIVGNANPDDKVRALTPADILAEMSYFLNLAEGLGKVDDIDHLGNRRIRAVGELLANQFRIGLARMERNVRERMSVQDNDVLTPQQIINIRPVTAAVKEFFGSSQLSQFMDQHNPLSELSHKRRLSALGPGGLTRDRAGYEVRDVHYTHYGRMCPIETPEGPNIGLINNLSSFGHLNKYGFIQTPYRKVDRATGRVTNEIVWLTADEEDEYTVAQANSKLNEDGTFAEEIVMGRHQGNNQEFSASVVDFVDVSPKQVVAVATACIPFLENDDSNRALMGANMQRQAVPLIDPKAPYVGTGMEYQAAHDSGAAVIAQHNGKVVFSDAEKVEIRRQDGSLDVYHITKFRRSNSGTAYNQRTLVKVGDIVEKGDFIADGPSMENGEMALGQNPVVAYMTWEGYNFEDAVIMSERLVKEDVYTSVHLEEFESETRDTKLGPEEITREIPNVGEEALKDLDEMGIIRIGAEVKEGDILVGKVTPKGEKDLSAEERLLHAIFGDKSREVRDTSLRVPHGGDGIVRDVKIFTRANGDELQSGVNMLVRVYIAQKRKIKVGDKMAGRHGNKGVVSRIVPVEDMPYLPDGTPVDIMLNPLGVPSRMNIGQVMELHLGMAARNLGIHIATPVFDGASSEDLWDTVREAGMDSDAKTVLYDGRTGEPFDNRVSVGVMYMIKLHHMVDDKLHARSVGPYSLVTQQPLGGKAQFGGQRFGEMEVWALEAYGASNVLQEILTYKSDDVTGRLKAYEAITKGKPIPKPGVPESFRVLVKELQSLGLDMRVLDEDDNEVELRDLDEGEDDDIMHVDDLEKAREKQAQETQEVSETTDEK</sequence>
<accession>P0DF31</accession>
<accession>Q8K8W3</accession>
<protein>
    <recommendedName>
        <fullName evidence="1">DNA-directed RNA polymerase subunit beta</fullName>
        <shortName evidence="1">RNAP subunit beta</shortName>
        <ecNumber evidence="1">2.7.7.6</ecNumber>
    </recommendedName>
    <alternativeName>
        <fullName evidence="1">RNA polymerase subunit beta</fullName>
    </alternativeName>
    <alternativeName>
        <fullName evidence="1">Transcriptase subunit beta</fullName>
    </alternativeName>
</protein>
<name>RPOB_STRPQ</name>
<reference key="1">
    <citation type="journal article" date="2003" name="Genome Res.">
        <title>Genome sequence of an M3 strain of Streptococcus pyogenes reveals a large-scale genomic rearrangement in invasive strains and new insights into phage evolution.</title>
        <authorList>
            <person name="Nakagawa I."/>
            <person name="Kurokawa K."/>
            <person name="Yamashita A."/>
            <person name="Nakata M."/>
            <person name="Tomiyasu Y."/>
            <person name="Okahashi N."/>
            <person name="Kawabata S."/>
            <person name="Yamazaki K."/>
            <person name="Shiba T."/>
            <person name="Yasunaga T."/>
            <person name="Hayashi H."/>
            <person name="Hattori M."/>
            <person name="Hamada S."/>
        </authorList>
    </citation>
    <scope>NUCLEOTIDE SEQUENCE [LARGE SCALE GENOMIC DNA]</scope>
    <source>
        <strain>SSI-1</strain>
    </source>
</reference>
<gene>
    <name evidence="1" type="primary">rpoB</name>
    <name type="ordered locus">SPs0076</name>
</gene>